<name>CRFA1_CONEP</name>
<feature type="signal peptide" evidence="2">
    <location>
        <begin position="1"/>
        <end position="19"/>
    </location>
</feature>
<feature type="propeptide" id="PRO_0000453208" evidence="6">
    <location>
        <begin position="20"/>
        <end position="25"/>
    </location>
</feature>
<feature type="peptide" id="PRO_0000453209" description="Conorfamide-Ep1" evidence="6">
    <location>
        <begin position="26"/>
        <end position="43"/>
    </location>
</feature>
<feature type="propeptide" id="PRO_0000453210" evidence="6">
    <location>
        <begin position="45"/>
        <end position="59"/>
    </location>
</feature>
<feature type="modified residue" description="Isoleucine amide" evidence="6">
    <location>
        <position position="43"/>
    </location>
</feature>
<reference key="1">
    <citation type="journal article" date="2021" name="J. Nat. Prod.">
        <title>Discovery of a potent conorfamide from Conus episcopatus using a novel zebrafish larvae assay.</title>
        <authorList>
            <person name="Bosse G.D."/>
            <person name="Urcino C."/>
            <person name="Watkins M."/>
            <person name="Florez Salcedo P."/>
            <person name="Kozel S."/>
            <person name="Chase K."/>
            <person name="Cabang A."/>
            <person name="Espino S.S."/>
            <person name="Safavi-Hemami H."/>
            <person name="Raghuraman S."/>
            <person name="Olivera B.M."/>
            <person name="Peterson R.T."/>
            <person name="Gajewiak J."/>
        </authorList>
    </citation>
    <scope>NUCLEOTIDE SEQUENCE [MRNA]</scope>
    <scope>SYNTHESIS OF 26-43</scope>
    <scope>FUNCTION</scope>
    <scope>AMIDATION AT ILE-43</scope>
    <source>
        <tissue>Venom duct</tissue>
    </source>
</reference>
<evidence type="ECO:0000250" key="1">
    <source>
        <dbReference type="UniProtKB" id="P0DOZ7"/>
    </source>
</evidence>
<evidence type="ECO:0000255" key="2"/>
<evidence type="ECO:0000269" key="3">
    <source>
    </source>
</evidence>
<evidence type="ECO:0000303" key="4">
    <source>
    </source>
</evidence>
<evidence type="ECO:0000305" key="5"/>
<evidence type="ECO:0000305" key="6">
    <source>
    </source>
</evidence>
<protein>
    <recommendedName>
        <fullName evidence="1 4">Conorfamide-Ep1</fullName>
        <shortName evidence="4">CNF-Ep1</shortName>
    </recommendedName>
    <alternativeName>
        <fullName evidence="1 4">Cono-RFamide-Ep1</fullName>
    </alternativeName>
</protein>
<sequence>MSGCGFLLLALLLLVTVEATKMEKKNFGILFYFTRPRNNFVRIGRRDMQSPLLSERLRF</sequence>
<proteinExistence type="evidence at protein level"/>
<dbReference type="SMR" id="P0DUQ4"/>
<dbReference type="GO" id="GO:0005576">
    <property type="term" value="C:extracellular region"/>
    <property type="evidence" value="ECO:0007669"/>
    <property type="project" value="UniProtKB-SubCell"/>
</dbReference>
<dbReference type="GO" id="GO:0090729">
    <property type="term" value="F:toxin activity"/>
    <property type="evidence" value="ECO:0007669"/>
    <property type="project" value="UniProtKB-KW"/>
</dbReference>
<organism>
    <name type="scientific">Conus episcopatus</name>
    <name type="common">Bishop's cone</name>
    <dbReference type="NCBI Taxonomy" id="88764"/>
    <lineage>
        <taxon>Eukaryota</taxon>
        <taxon>Metazoa</taxon>
        <taxon>Spiralia</taxon>
        <taxon>Lophotrochozoa</taxon>
        <taxon>Mollusca</taxon>
        <taxon>Gastropoda</taxon>
        <taxon>Caenogastropoda</taxon>
        <taxon>Neogastropoda</taxon>
        <taxon>Conoidea</taxon>
        <taxon>Conidae</taxon>
        <taxon>Conus</taxon>
        <taxon>Darioconus</taxon>
    </lineage>
</organism>
<keyword id="KW-0027">Amidation</keyword>
<keyword id="KW-0165">Cleavage on pair of basic residues</keyword>
<keyword id="KW-0528">Neurotoxin</keyword>
<keyword id="KW-0964">Secreted</keyword>
<keyword id="KW-0732">Signal</keyword>
<keyword id="KW-0800">Toxin</keyword>
<comment type="function">
    <text evidence="3">Neurotoxin that is active on vertebrates (PubMed:33764053). When tested at high doses (10 uM), the toxin affects all zebrafish and mouse DRG neurons in culture, which could be an indication of an effect on a widely expressed receptor or ion channel found in both species (PubMed:33764053). At low doses (1 uM), the effects of the toxin are confined to a specific subpopulation of zebrafish and mouse DRG neurons (PubMed:33764053). In vivo, it induces long-lasting dramatic alterations in the locomotor behavior of zebrafish larvae (PubMed:33764053). It rapidly induces hypoactivity and death of larvae at high doses and it causes hyperactivity at lower doses (PubMed:33764053). In zebrafish adults, intramuscular injection causes the decrease of the movements and visited spaces (PubMed:33764053). In mice, intracranial injection causes lethargy and prolonges sleeping phases and reduced movement (PubMed:33764053).</text>
</comment>
<comment type="subcellular location">
    <subcellularLocation>
        <location evidence="6">Secreted</location>
    </subcellularLocation>
</comment>
<comment type="tissue specificity">
    <text evidence="6">Expressed by the venom duct.</text>
</comment>
<comment type="miscellaneous">
    <text evidence="5">The mature peptide does not contain cysteine residue.</text>
</comment>
<comment type="similarity">
    <text evidence="5">Belongs to the FARP (FMRFamide related peptide) family.</text>
</comment>
<accession>P0DUQ4</accession>